<sequence>MGTPVKILVVRNHILFSVVVLLAVAQSSYLPPCEPVNETVAVEKEGCPKCLVLQTTICSGHCLTKEPVYKSPFSTVYQHVCTYRDVRYETVRLPDCPPGVDPHITYPVALSCDCSLCTMDTSDCTIESLQPDFCMSQREDFLVY</sequence>
<proteinExistence type="evidence at protein level"/>
<comment type="function">
    <text>Involved in gametogenesis and steroidogenesis.</text>
</comment>
<comment type="subunit">
    <text>Heterodimer of an alpha and a beta chain.</text>
</comment>
<comment type="subcellular location">
    <subcellularLocation>
        <location>Secreted</location>
    </subcellularLocation>
</comment>
<comment type="similarity">
    <text evidence="3">Belongs to the glycoprotein hormones subunit beta family.</text>
</comment>
<organism>
    <name type="scientific">Cyprinus carpio</name>
    <name type="common">Common carp</name>
    <dbReference type="NCBI Taxonomy" id="7962"/>
    <lineage>
        <taxon>Eukaryota</taxon>
        <taxon>Metazoa</taxon>
        <taxon>Chordata</taxon>
        <taxon>Craniata</taxon>
        <taxon>Vertebrata</taxon>
        <taxon>Euteleostomi</taxon>
        <taxon>Actinopterygii</taxon>
        <taxon>Neopterygii</taxon>
        <taxon>Teleostei</taxon>
        <taxon>Ostariophysi</taxon>
        <taxon>Cypriniformes</taxon>
        <taxon>Cyprinidae</taxon>
        <taxon>Cyprininae</taxon>
        <taxon>Cyprinus</taxon>
    </lineage>
</organism>
<feature type="signal peptide" evidence="2">
    <location>
        <begin position="1"/>
        <end position="27"/>
    </location>
</feature>
<feature type="chain" id="PRO_0000011689" description="Gonadotropin subunit beta-2">
    <location>
        <begin position="28"/>
        <end position="142"/>
    </location>
</feature>
<feature type="propeptide" id="PRO_0000011690">
    <location>
        <begin position="143"/>
        <end position="144"/>
    </location>
</feature>
<feature type="glycosylation site" description="N-linked (GlcNAc...) asparagine" evidence="3">
    <location>
        <position position="37"/>
    </location>
</feature>
<feature type="disulfide bond" evidence="1">
    <location>
        <begin position="33"/>
        <end position="81"/>
    </location>
</feature>
<feature type="disulfide bond" evidence="1">
    <location>
        <begin position="47"/>
        <end position="96"/>
    </location>
</feature>
<feature type="disulfide bond" evidence="1">
    <location>
        <begin position="50"/>
        <end position="134"/>
    </location>
</feature>
<feature type="disulfide bond" evidence="1">
    <location>
        <begin position="58"/>
        <end position="112"/>
    </location>
</feature>
<feature type="disulfide bond" evidence="1">
    <location>
        <begin position="62"/>
        <end position="114"/>
    </location>
</feature>
<feature type="disulfide bond" evidence="1">
    <location>
        <begin position="117"/>
        <end position="124"/>
    </location>
</feature>
<gene>
    <name type="primary">cgbb</name>
</gene>
<reference key="1">
    <citation type="journal article" date="1988" name="Int. J. Pept. Protein Res.">
        <title>Primary structures of carp gonadotropin subunits deduced from cDNA nucleotide sequences.</title>
        <authorList>
            <person name="Chang Y.S."/>
            <person name="Huang C.-J."/>
            <person name="Huang F.-L."/>
            <person name="Lo T.-B."/>
        </authorList>
    </citation>
    <scope>NUCLEOTIDE SEQUENCE [GENOMIC DNA]</scope>
</reference>
<reference key="2">
    <citation type="submission" date="1991-05" db="EMBL/GenBank/DDBJ databases">
        <authorList>
            <person name="Chang Y.S."/>
            <person name="Huang F.-L."/>
            <person name="Lo T.-B."/>
        </authorList>
    </citation>
    <scope>NUCLEOTIDE SEQUENCE [GENOMIC DNA]</scope>
</reference>
<reference key="3">
    <citation type="journal article" date="1977" name="Biochimie">
        <title>The evolution of gonadotropins: some molecular data concerning a non-mammalian pituitary gonadotropin, the hormone from a teleost fish (Cyprinus carpio L.).</title>
        <authorList>
            <person name="Jolles J."/>
            <person name="Burzawa-Gerard E."/>
            <person name="Fontaine Y.-A."/>
            <person name="Jolles P."/>
        </authorList>
    </citation>
    <scope>PROTEIN SEQUENCE OF 28-53 AND 141-142</scope>
</reference>
<accession>P01235</accession>
<evidence type="ECO:0000250" key="1"/>
<evidence type="ECO:0000269" key="2">
    <source>
    </source>
</evidence>
<evidence type="ECO:0000305" key="3"/>
<keyword id="KW-0903">Direct protein sequencing</keyword>
<keyword id="KW-1015">Disulfide bond</keyword>
<keyword id="KW-0325">Glycoprotein</keyword>
<keyword id="KW-0372">Hormone</keyword>
<keyword id="KW-1185">Reference proteome</keyword>
<keyword id="KW-0964">Secreted</keyword>
<keyword id="KW-0732">Signal</keyword>
<dbReference type="EMBL" id="X59888">
    <property type="protein sequence ID" value="CAA42542.1"/>
    <property type="molecule type" value="Genomic_DNA"/>
</dbReference>
<dbReference type="EMBL" id="X59889">
    <property type="protein sequence ID" value="CAA42543.1"/>
    <property type="molecule type" value="Genomic_DNA"/>
</dbReference>
<dbReference type="PIR" id="S29677">
    <property type="entry name" value="UTCAB"/>
</dbReference>
<dbReference type="SMR" id="P01235"/>
<dbReference type="GlyCosmos" id="P01235">
    <property type="glycosylation" value="1 site, No reported glycans"/>
</dbReference>
<dbReference type="Ensembl" id="ENSCCRT00010065555.1">
    <property type="protein sequence ID" value="ENSCCRP00010059780.1"/>
    <property type="gene ID" value="ENSCCRG00010025333.1"/>
</dbReference>
<dbReference type="Ensembl" id="ENSCCRT00015095018.1">
    <property type="protein sequence ID" value="ENSCCRP00015092063.1"/>
    <property type="gene ID" value="ENSCCRG00015037106.1"/>
</dbReference>
<dbReference type="Ensembl" id="ENSCCRT00020062409.1">
    <property type="protein sequence ID" value="ENSCCRP00020056601.1"/>
    <property type="gene ID" value="ENSCCRG00020026882.1"/>
</dbReference>
<dbReference type="GeneID" id="109082413"/>
<dbReference type="KEGG" id="ccar:109082413"/>
<dbReference type="CTD" id="3972"/>
<dbReference type="OMA" id="CTYRDFY"/>
<dbReference type="OrthoDB" id="8453657at2759"/>
<dbReference type="Proteomes" id="UP000694384">
    <property type="component" value="Unplaced"/>
</dbReference>
<dbReference type="Proteomes" id="UP000694427">
    <property type="component" value="Unplaced"/>
</dbReference>
<dbReference type="Proteomes" id="UP000694700">
    <property type="component" value="Unplaced"/>
</dbReference>
<dbReference type="Proteomes" id="UP000694701">
    <property type="component" value="Unplaced"/>
</dbReference>
<dbReference type="Proteomes" id="UP001155660">
    <property type="component" value="Chromosome B13"/>
</dbReference>
<dbReference type="GO" id="GO:0005737">
    <property type="term" value="C:cytoplasm"/>
    <property type="evidence" value="ECO:0007669"/>
    <property type="project" value="TreeGrafter"/>
</dbReference>
<dbReference type="GO" id="GO:0005615">
    <property type="term" value="C:extracellular space"/>
    <property type="evidence" value="ECO:0007669"/>
    <property type="project" value="TreeGrafter"/>
</dbReference>
<dbReference type="GO" id="GO:0031762">
    <property type="term" value="F:follicle-stimulating hormone receptor binding"/>
    <property type="evidence" value="ECO:0000250"/>
    <property type="project" value="UniProtKB"/>
</dbReference>
<dbReference type="GO" id="GO:0005179">
    <property type="term" value="F:hormone activity"/>
    <property type="evidence" value="ECO:0007669"/>
    <property type="project" value="UniProtKB-KW"/>
</dbReference>
<dbReference type="GO" id="GO:0031775">
    <property type="term" value="F:lutropin-choriogonadotropic hormone receptor binding"/>
    <property type="evidence" value="ECO:0000250"/>
    <property type="project" value="UniProtKB"/>
</dbReference>
<dbReference type="GO" id="GO:0046982">
    <property type="term" value="F:protein heterodimerization activity"/>
    <property type="evidence" value="ECO:0000250"/>
    <property type="project" value="UniProtKB"/>
</dbReference>
<dbReference type="GO" id="GO:0007186">
    <property type="term" value="P:G protein-coupled receptor signaling pathway"/>
    <property type="evidence" value="ECO:0007669"/>
    <property type="project" value="TreeGrafter"/>
</dbReference>
<dbReference type="GO" id="GO:0030728">
    <property type="term" value="P:ovulation"/>
    <property type="evidence" value="ECO:0007669"/>
    <property type="project" value="TreeGrafter"/>
</dbReference>
<dbReference type="GO" id="GO:2000836">
    <property type="term" value="P:positive regulation of androgen secretion"/>
    <property type="evidence" value="ECO:0000250"/>
    <property type="project" value="UniProtKB"/>
</dbReference>
<dbReference type="GO" id="GO:2000866">
    <property type="term" value="P:positive regulation of estradiol secretion"/>
    <property type="evidence" value="ECO:0000250"/>
    <property type="project" value="UniProtKB"/>
</dbReference>
<dbReference type="GO" id="GO:0010628">
    <property type="term" value="P:positive regulation of gene expression"/>
    <property type="evidence" value="ECO:0000250"/>
    <property type="project" value="UniProtKB"/>
</dbReference>
<dbReference type="CDD" id="cd00069">
    <property type="entry name" value="GHB_like"/>
    <property type="match status" value="1"/>
</dbReference>
<dbReference type="FunFam" id="2.10.90.10:FF:000007">
    <property type="entry name" value="Luteinizing hormone beta subunit"/>
    <property type="match status" value="1"/>
</dbReference>
<dbReference type="Gene3D" id="2.10.90.10">
    <property type="entry name" value="Cystine-knot cytokines"/>
    <property type="match status" value="1"/>
</dbReference>
<dbReference type="InterPro" id="IPR029034">
    <property type="entry name" value="Cystine-knot_cytokine"/>
</dbReference>
<dbReference type="InterPro" id="IPR006208">
    <property type="entry name" value="Glyco_hormone_CN"/>
</dbReference>
<dbReference type="InterPro" id="IPR001545">
    <property type="entry name" value="Gonadotropin_bsu"/>
</dbReference>
<dbReference type="InterPro" id="IPR018245">
    <property type="entry name" value="Gonadotropin_bsu_CS"/>
</dbReference>
<dbReference type="PANTHER" id="PTHR11515">
    <property type="entry name" value="GLYCOPROTEIN HORMONE BETA CHAIN"/>
    <property type="match status" value="1"/>
</dbReference>
<dbReference type="PANTHER" id="PTHR11515:SF11">
    <property type="entry name" value="LUTROPIN SUBUNIT BETA"/>
    <property type="match status" value="1"/>
</dbReference>
<dbReference type="Pfam" id="PF00007">
    <property type="entry name" value="Cys_knot"/>
    <property type="match status" value="1"/>
</dbReference>
<dbReference type="SMART" id="SM00068">
    <property type="entry name" value="GHB"/>
    <property type="match status" value="1"/>
</dbReference>
<dbReference type="SUPFAM" id="SSF57501">
    <property type="entry name" value="Cystine-knot cytokines"/>
    <property type="match status" value="1"/>
</dbReference>
<dbReference type="PROSITE" id="PS00261">
    <property type="entry name" value="GLYCO_HORMONE_BETA_1"/>
    <property type="match status" value="1"/>
</dbReference>
<dbReference type="PROSITE" id="PS00689">
    <property type="entry name" value="GLYCO_HORMONE_BETA_2"/>
    <property type="match status" value="1"/>
</dbReference>
<name>GTHB2_CYPCA</name>
<protein>
    <recommendedName>
        <fullName>Gonadotropin subunit beta-2</fullName>
    </recommendedName>
    <alternativeName>
        <fullName>GTH-II-beta</fullName>
    </alternativeName>
    <alternativeName>
        <fullName>Gonadotropin beta-II chain</fullName>
    </alternativeName>
    <alternativeName>
        <fullName>Luteinizing hormone-like GTH</fullName>
    </alternativeName>
</protein>